<sequence>MKQYLDLMKKVLEEGTPKADRTGTGTLSIFGHQMRFNLQDGFPLVTTKRCHLRSIIHELLWFLNGDTNIAYLKENNVSIWDEWADENGDLGPIYGKQWRAWGAADGRKIDQLSNVVNQLKQDPDSRRIIVSAWNVGELDQMALAPCHAFFQFYVADGKLSCQLYQRSCDVFLGLPFNIASYALLVHMMAQQCDLAVGDFVWTGGDTHLYSNHIDQAHLQLSREPRVLPKLVIKRKPDSLFDYHFDDFDIEGYDPHPGIKAPIAI</sequence>
<evidence type="ECO:0000255" key="1">
    <source>
        <dbReference type="HAMAP-Rule" id="MF_00008"/>
    </source>
</evidence>
<reference key="1">
    <citation type="submission" date="2007-02" db="EMBL/GenBank/DDBJ databases">
        <title>Complete sequence of chromosome of Yersinia pestis Pestoides F.</title>
        <authorList>
            <consortium name="US DOE Joint Genome Institute"/>
            <person name="Copeland A."/>
            <person name="Lucas S."/>
            <person name="Lapidus A."/>
            <person name="Barry K."/>
            <person name="Detter J.C."/>
            <person name="Glavina del Rio T."/>
            <person name="Hammon N."/>
            <person name="Israni S."/>
            <person name="Dalin E."/>
            <person name="Tice H."/>
            <person name="Pitluck S."/>
            <person name="Di Bartolo G."/>
            <person name="Chain P."/>
            <person name="Malfatti S."/>
            <person name="Shin M."/>
            <person name="Vergez L."/>
            <person name="Schmutz J."/>
            <person name="Larimer F."/>
            <person name="Land M."/>
            <person name="Hauser L."/>
            <person name="Worsham P."/>
            <person name="Chu M."/>
            <person name="Bearden S."/>
            <person name="Garcia E."/>
            <person name="Richardson P."/>
        </authorList>
    </citation>
    <scope>NUCLEOTIDE SEQUENCE [LARGE SCALE GENOMIC DNA]</scope>
    <source>
        <strain>Pestoides F</strain>
    </source>
</reference>
<accession>A4TLC5</accession>
<proteinExistence type="inferred from homology"/>
<comment type="function">
    <text evidence="1">Catalyzes the reductive methylation of 2'-deoxyuridine-5'-monophosphate (dUMP) to 2'-deoxythymidine-5'-monophosphate (dTMP) while utilizing 5,10-methylenetetrahydrofolate (mTHF) as the methyl donor and reductant in the reaction, yielding dihydrofolate (DHF) as a by-product. This enzymatic reaction provides an intracellular de novo source of dTMP, an essential precursor for DNA biosynthesis.</text>
</comment>
<comment type="catalytic activity">
    <reaction evidence="1">
        <text>dUMP + (6R)-5,10-methylene-5,6,7,8-tetrahydrofolate = 7,8-dihydrofolate + dTMP</text>
        <dbReference type="Rhea" id="RHEA:12104"/>
        <dbReference type="ChEBI" id="CHEBI:15636"/>
        <dbReference type="ChEBI" id="CHEBI:57451"/>
        <dbReference type="ChEBI" id="CHEBI:63528"/>
        <dbReference type="ChEBI" id="CHEBI:246422"/>
        <dbReference type="EC" id="2.1.1.45"/>
    </reaction>
</comment>
<comment type="pathway">
    <text evidence="1">Pyrimidine metabolism; dTTP biosynthesis.</text>
</comment>
<comment type="subunit">
    <text evidence="1">Homodimer.</text>
</comment>
<comment type="subcellular location">
    <subcellularLocation>
        <location evidence="1">Cytoplasm</location>
    </subcellularLocation>
</comment>
<comment type="similarity">
    <text evidence="1">Belongs to the thymidylate synthase family. Bacterial-type ThyA subfamily.</text>
</comment>
<organism>
    <name type="scientific">Yersinia pestis (strain Pestoides F)</name>
    <dbReference type="NCBI Taxonomy" id="386656"/>
    <lineage>
        <taxon>Bacteria</taxon>
        <taxon>Pseudomonadati</taxon>
        <taxon>Pseudomonadota</taxon>
        <taxon>Gammaproteobacteria</taxon>
        <taxon>Enterobacterales</taxon>
        <taxon>Yersiniaceae</taxon>
        <taxon>Yersinia</taxon>
    </lineage>
</organism>
<feature type="chain" id="PRO_1000000708" description="Thymidylate synthase">
    <location>
        <begin position="1"/>
        <end position="264"/>
    </location>
</feature>
<feature type="active site" description="Nucleophile" evidence="1">
    <location>
        <position position="146"/>
    </location>
</feature>
<feature type="binding site" description="in other chain" evidence="1">
    <location>
        <position position="21"/>
    </location>
    <ligand>
        <name>dUMP</name>
        <dbReference type="ChEBI" id="CHEBI:246422"/>
        <note>ligand shared between dimeric partners</note>
    </ligand>
</feature>
<feature type="binding site" evidence="1">
    <location>
        <position position="51"/>
    </location>
    <ligand>
        <name>(6R)-5,10-methylene-5,6,7,8-tetrahydrofolate</name>
        <dbReference type="ChEBI" id="CHEBI:15636"/>
    </ligand>
</feature>
<feature type="binding site" evidence="1">
    <location>
        <begin position="126"/>
        <end position="127"/>
    </location>
    <ligand>
        <name>dUMP</name>
        <dbReference type="ChEBI" id="CHEBI:246422"/>
        <note>ligand shared between dimeric partners</note>
    </ligand>
</feature>
<feature type="binding site" description="in other chain" evidence="1">
    <location>
        <begin position="166"/>
        <end position="169"/>
    </location>
    <ligand>
        <name>dUMP</name>
        <dbReference type="ChEBI" id="CHEBI:246422"/>
        <note>ligand shared between dimeric partners</note>
    </ligand>
</feature>
<feature type="binding site" evidence="1">
    <location>
        <position position="169"/>
    </location>
    <ligand>
        <name>(6R)-5,10-methylene-5,6,7,8-tetrahydrofolate</name>
        <dbReference type="ChEBI" id="CHEBI:15636"/>
    </ligand>
</feature>
<feature type="binding site" description="in other chain" evidence="1">
    <location>
        <position position="177"/>
    </location>
    <ligand>
        <name>dUMP</name>
        <dbReference type="ChEBI" id="CHEBI:246422"/>
        <note>ligand shared between dimeric partners</note>
    </ligand>
</feature>
<feature type="binding site" description="in other chain" evidence="1">
    <location>
        <begin position="207"/>
        <end position="209"/>
    </location>
    <ligand>
        <name>dUMP</name>
        <dbReference type="ChEBI" id="CHEBI:246422"/>
        <note>ligand shared between dimeric partners</note>
    </ligand>
</feature>
<feature type="binding site" evidence="1">
    <location>
        <position position="263"/>
    </location>
    <ligand>
        <name>(6R)-5,10-methylene-5,6,7,8-tetrahydrofolate</name>
        <dbReference type="ChEBI" id="CHEBI:15636"/>
    </ligand>
</feature>
<name>TYSY_YERPP</name>
<dbReference type="EC" id="2.1.1.45" evidence="1"/>
<dbReference type="EMBL" id="CP000668">
    <property type="protein sequence ID" value="ABP40087.1"/>
    <property type="molecule type" value="Genomic_DNA"/>
</dbReference>
<dbReference type="RefSeq" id="WP_002211384.1">
    <property type="nucleotide sequence ID" value="NZ_CP009715.1"/>
</dbReference>
<dbReference type="SMR" id="A4TLC5"/>
<dbReference type="GeneID" id="57973851"/>
<dbReference type="KEGG" id="ypp:YPDSF_1702"/>
<dbReference type="PATRIC" id="fig|386656.14.peg.2059"/>
<dbReference type="UniPathway" id="UPA00575"/>
<dbReference type="GO" id="GO:0005829">
    <property type="term" value="C:cytosol"/>
    <property type="evidence" value="ECO:0007669"/>
    <property type="project" value="TreeGrafter"/>
</dbReference>
<dbReference type="GO" id="GO:0004799">
    <property type="term" value="F:thymidylate synthase activity"/>
    <property type="evidence" value="ECO:0007669"/>
    <property type="project" value="UniProtKB-UniRule"/>
</dbReference>
<dbReference type="GO" id="GO:0006231">
    <property type="term" value="P:dTMP biosynthetic process"/>
    <property type="evidence" value="ECO:0007669"/>
    <property type="project" value="UniProtKB-UniRule"/>
</dbReference>
<dbReference type="GO" id="GO:0006235">
    <property type="term" value="P:dTTP biosynthetic process"/>
    <property type="evidence" value="ECO:0007669"/>
    <property type="project" value="UniProtKB-UniRule"/>
</dbReference>
<dbReference type="GO" id="GO:0032259">
    <property type="term" value="P:methylation"/>
    <property type="evidence" value="ECO:0007669"/>
    <property type="project" value="UniProtKB-KW"/>
</dbReference>
<dbReference type="CDD" id="cd00351">
    <property type="entry name" value="TS_Pyrimidine_HMase"/>
    <property type="match status" value="1"/>
</dbReference>
<dbReference type="FunFam" id="3.30.572.10:FF:000001">
    <property type="entry name" value="Thymidylate synthase"/>
    <property type="match status" value="1"/>
</dbReference>
<dbReference type="Gene3D" id="3.30.572.10">
    <property type="entry name" value="Thymidylate synthase/dCMP hydroxymethylase domain"/>
    <property type="match status" value="1"/>
</dbReference>
<dbReference type="HAMAP" id="MF_00008">
    <property type="entry name" value="Thymidy_synth_bact"/>
    <property type="match status" value="1"/>
</dbReference>
<dbReference type="InterPro" id="IPR045097">
    <property type="entry name" value="Thymidate_synth/dCMP_Mease"/>
</dbReference>
<dbReference type="InterPro" id="IPR023451">
    <property type="entry name" value="Thymidate_synth/dCMP_Mease_dom"/>
</dbReference>
<dbReference type="InterPro" id="IPR036926">
    <property type="entry name" value="Thymidate_synth/dCMP_Mease_sf"/>
</dbReference>
<dbReference type="InterPro" id="IPR000398">
    <property type="entry name" value="Thymidylate_synthase"/>
</dbReference>
<dbReference type="InterPro" id="IPR020940">
    <property type="entry name" value="Thymidylate_synthase_AS"/>
</dbReference>
<dbReference type="NCBIfam" id="NF002497">
    <property type="entry name" value="PRK01827.1-3"/>
    <property type="match status" value="1"/>
</dbReference>
<dbReference type="NCBIfam" id="NF002499">
    <property type="entry name" value="PRK01827.1-5"/>
    <property type="match status" value="1"/>
</dbReference>
<dbReference type="NCBIfam" id="TIGR03284">
    <property type="entry name" value="thym_sym"/>
    <property type="match status" value="2"/>
</dbReference>
<dbReference type="PANTHER" id="PTHR11548:SF9">
    <property type="entry name" value="THYMIDYLATE SYNTHASE"/>
    <property type="match status" value="1"/>
</dbReference>
<dbReference type="PANTHER" id="PTHR11548">
    <property type="entry name" value="THYMIDYLATE SYNTHASE 1"/>
    <property type="match status" value="1"/>
</dbReference>
<dbReference type="Pfam" id="PF00303">
    <property type="entry name" value="Thymidylat_synt"/>
    <property type="match status" value="1"/>
</dbReference>
<dbReference type="PRINTS" id="PR00108">
    <property type="entry name" value="THYMDSNTHASE"/>
</dbReference>
<dbReference type="SUPFAM" id="SSF55831">
    <property type="entry name" value="Thymidylate synthase/dCMP hydroxymethylase"/>
    <property type="match status" value="1"/>
</dbReference>
<dbReference type="PROSITE" id="PS00091">
    <property type="entry name" value="THYMIDYLATE_SYNTHASE"/>
    <property type="match status" value="1"/>
</dbReference>
<keyword id="KW-0963">Cytoplasm</keyword>
<keyword id="KW-0489">Methyltransferase</keyword>
<keyword id="KW-0545">Nucleotide biosynthesis</keyword>
<keyword id="KW-0808">Transferase</keyword>
<protein>
    <recommendedName>
        <fullName evidence="1">Thymidylate synthase</fullName>
        <shortName evidence="1">TS</shortName>
        <shortName evidence="1">TSase</shortName>
        <ecNumber evidence="1">2.1.1.45</ecNumber>
    </recommendedName>
</protein>
<gene>
    <name evidence="1" type="primary">thyA</name>
    <name type="ordered locus">YPDSF_1702</name>
</gene>